<proteinExistence type="evidence at protein level"/>
<name>PPK1_LOBRE</name>
<sequence>DGYTPRL</sequence>
<protein>
    <recommendedName>
        <fullName evidence="4">Pyrokinin-1</fullName>
        <shortName evidence="4">PK-1</shortName>
    </recommendedName>
    <alternativeName>
        <fullName evidence="1">YXPRL-amide</fullName>
    </alternativeName>
</protein>
<dbReference type="GO" id="GO:0005576">
    <property type="term" value="C:extracellular region"/>
    <property type="evidence" value="ECO:0007669"/>
    <property type="project" value="UniProtKB-SubCell"/>
</dbReference>
<dbReference type="GO" id="GO:0007218">
    <property type="term" value="P:neuropeptide signaling pathway"/>
    <property type="evidence" value="ECO:0007669"/>
    <property type="project" value="UniProtKB-KW"/>
</dbReference>
<evidence type="ECO:0000250" key="1">
    <source>
        <dbReference type="UniProtKB" id="P82619"/>
    </source>
</evidence>
<evidence type="ECO:0000255" key="2"/>
<evidence type="ECO:0000269" key="3">
    <source>
    </source>
</evidence>
<evidence type="ECO:0000303" key="4">
    <source>
    </source>
</evidence>
<evidence type="ECO:0000305" key="5"/>
<evidence type="ECO:0000305" key="6">
    <source>
    </source>
</evidence>
<keyword id="KW-0027">Amidation</keyword>
<keyword id="KW-0903">Direct protein sequencing</keyword>
<keyword id="KW-0527">Neuropeptide</keyword>
<keyword id="KW-0964">Secreted</keyword>
<comment type="function">
    <text evidence="1">Myoactive.</text>
</comment>
<comment type="subcellular location">
    <subcellularLocation>
        <location evidence="6">Secreted</location>
    </subcellularLocation>
</comment>
<comment type="similarity">
    <text evidence="2">Belongs to the pyrokinin family.</text>
</comment>
<organism>
    <name type="scientific">Lobatophasma redelinghuysense</name>
    <name type="common">Gladiator</name>
    <name type="synonym">Heel-walker</name>
    <dbReference type="NCBI Taxonomy" id="253128"/>
    <lineage>
        <taxon>Eukaryota</taxon>
        <taxon>Metazoa</taxon>
        <taxon>Ecdysozoa</taxon>
        <taxon>Arthropoda</taxon>
        <taxon>Hexapoda</taxon>
        <taxon>Insecta</taxon>
        <taxon>Pterygota</taxon>
        <taxon>Neoptera</taxon>
        <taxon>Polyneoptera</taxon>
        <taxon>Mantophasmatodea</taxon>
        <taxon>Austrophasmatidae</taxon>
        <taxon>Lobatophasma</taxon>
    </lineage>
</organism>
<reference evidence="5" key="1">
    <citation type="journal article" date="2012" name="Syst. Biol.">
        <title>Peptidomics-based phylogeny and biogeography of Mantophasmatodea (Hexapoda).</title>
        <authorList>
            <person name="Predel R."/>
            <person name="Neupert S."/>
            <person name="Huetteroth W."/>
            <person name="Kahnt J."/>
            <person name="Waidelich D."/>
            <person name="Roth S."/>
        </authorList>
    </citation>
    <scope>PROTEIN SEQUENCE</scope>
    <scope>AMIDATION AT LEU-7</scope>
    <source>
        <tissue evidence="3">Corpora cardiaca</tissue>
    </source>
</reference>
<feature type="peptide" id="PRO_0000421579" description="Pyrokinin-1" evidence="3">
    <location>
        <begin position="1"/>
        <end position="7"/>
    </location>
</feature>
<feature type="modified residue" description="Leucine amide" evidence="3">
    <location>
        <position position="7"/>
    </location>
</feature>
<accession>B3A091</accession>